<feature type="chain" id="PRO_1000149311" description="2-isopropylmalate synthase">
    <location>
        <begin position="1"/>
        <end position="528"/>
    </location>
</feature>
<feature type="domain" description="Pyruvate carboxyltransferase" evidence="1">
    <location>
        <begin position="12"/>
        <end position="279"/>
    </location>
</feature>
<feature type="region of interest" description="Regulatory domain" evidence="1">
    <location>
        <begin position="401"/>
        <end position="528"/>
    </location>
</feature>
<feature type="binding site" evidence="1">
    <location>
        <position position="21"/>
    </location>
    <ligand>
        <name>Mn(2+)</name>
        <dbReference type="ChEBI" id="CHEBI:29035"/>
    </ligand>
</feature>
<feature type="binding site" evidence="1">
    <location>
        <position position="214"/>
    </location>
    <ligand>
        <name>Mn(2+)</name>
        <dbReference type="ChEBI" id="CHEBI:29035"/>
    </ligand>
</feature>
<feature type="binding site" evidence="1">
    <location>
        <position position="216"/>
    </location>
    <ligand>
        <name>Mn(2+)</name>
        <dbReference type="ChEBI" id="CHEBI:29035"/>
    </ligand>
</feature>
<feature type="binding site" evidence="1">
    <location>
        <position position="250"/>
    </location>
    <ligand>
        <name>Mn(2+)</name>
        <dbReference type="ChEBI" id="CHEBI:29035"/>
    </ligand>
</feature>
<name>LEU1_STRMK</name>
<organism>
    <name type="scientific">Stenotrophomonas maltophilia (strain K279a)</name>
    <dbReference type="NCBI Taxonomy" id="522373"/>
    <lineage>
        <taxon>Bacteria</taxon>
        <taxon>Pseudomonadati</taxon>
        <taxon>Pseudomonadota</taxon>
        <taxon>Gammaproteobacteria</taxon>
        <taxon>Lysobacterales</taxon>
        <taxon>Lysobacteraceae</taxon>
        <taxon>Stenotrophomonas</taxon>
        <taxon>Stenotrophomonas maltophilia group</taxon>
    </lineage>
</organism>
<evidence type="ECO:0000255" key="1">
    <source>
        <dbReference type="HAMAP-Rule" id="MF_01025"/>
    </source>
</evidence>
<reference key="1">
    <citation type="journal article" date="2008" name="Genome Biol.">
        <title>The complete genome, comparative and functional analysis of Stenotrophomonas maltophilia reveals an organism heavily shielded by drug resistance determinants.</title>
        <authorList>
            <person name="Crossman L.C."/>
            <person name="Gould V.C."/>
            <person name="Dow J.M."/>
            <person name="Vernikos G.S."/>
            <person name="Okazaki A."/>
            <person name="Sebaihia M."/>
            <person name="Saunders D."/>
            <person name="Arrowsmith C."/>
            <person name="Carver T."/>
            <person name="Peters N."/>
            <person name="Adlem E."/>
            <person name="Kerhornou A."/>
            <person name="Lord A."/>
            <person name="Murphy L."/>
            <person name="Seeger K."/>
            <person name="Squares R."/>
            <person name="Rutter S."/>
            <person name="Quail M.A."/>
            <person name="Rajandream M.A."/>
            <person name="Harris D."/>
            <person name="Churcher C."/>
            <person name="Bentley S.D."/>
            <person name="Parkhill J."/>
            <person name="Thomson N.R."/>
            <person name="Avison M.B."/>
        </authorList>
    </citation>
    <scope>NUCLEOTIDE SEQUENCE [LARGE SCALE GENOMIC DNA]</scope>
    <source>
        <strain>K279a</strain>
    </source>
</reference>
<accession>B2FT78</accession>
<comment type="function">
    <text evidence="1">Catalyzes the condensation of the acetyl group of acetyl-CoA with 3-methyl-2-oxobutanoate (2-ketoisovalerate) to form 3-carboxy-3-hydroxy-4-methylpentanoate (2-isopropylmalate).</text>
</comment>
<comment type="catalytic activity">
    <reaction evidence="1">
        <text>3-methyl-2-oxobutanoate + acetyl-CoA + H2O = (2S)-2-isopropylmalate + CoA + H(+)</text>
        <dbReference type="Rhea" id="RHEA:21524"/>
        <dbReference type="ChEBI" id="CHEBI:1178"/>
        <dbReference type="ChEBI" id="CHEBI:11851"/>
        <dbReference type="ChEBI" id="CHEBI:15377"/>
        <dbReference type="ChEBI" id="CHEBI:15378"/>
        <dbReference type="ChEBI" id="CHEBI:57287"/>
        <dbReference type="ChEBI" id="CHEBI:57288"/>
        <dbReference type="EC" id="2.3.3.13"/>
    </reaction>
</comment>
<comment type="cofactor">
    <cofactor evidence="1">
        <name>Mn(2+)</name>
        <dbReference type="ChEBI" id="CHEBI:29035"/>
    </cofactor>
</comment>
<comment type="pathway">
    <text evidence="1">Amino-acid biosynthesis; L-leucine biosynthesis; L-leucine from 3-methyl-2-oxobutanoate: step 1/4.</text>
</comment>
<comment type="subunit">
    <text evidence="1">Homodimer.</text>
</comment>
<comment type="subcellular location">
    <subcellularLocation>
        <location evidence="1">Cytoplasm</location>
    </subcellularLocation>
</comment>
<comment type="similarity">
    <text evidence="1">Belongs to the alpha-IPM synthase/homocitrate synthase family. LeuA type 1 subfamily.</text>
</comment>
<sequence>MTTIERITTPRIRIFDTTLRDGEQSPGCSMSPPQKLVMARALDELGVDIIETGFPASSQSDREAMALIGRELRRPSLSLAVLSRCLQADIETSARALEAAANPRLHVFLSTSPLHREHKLRMTREQVLESVRKHVSLARSYIDDVEFSAEDATRTELDYLIEVARVAIAAGATTINLPDTVGFTTPEEIRAMFQQVIAGVADVPNAANVIFSAHCHNDLGLAVANSLAAIEGGARQVECTVNGIGERAGNCSLEEIAMVLKVRQAFYEQDSSINTPRIVGTSQLLQRLVGMPVQRNKAIVGANAFAHESGIHQHGMLRHRGTYEIMRPEDVGWEDSQMVLGRHSGRAAVEARLRALGFWLDEDELKLVFEQFKGLCEQQRVVTDADLQTLMQGGSNAQGYRLASMTISDVGSRANALVELSDPDGNRVAETAQGDGPVDALFGALSAATGVQLMLDSYHVHSVGIGADARGEANLSVRHEGVEYDGTGTSKDIIEASALAWLDVANRLLRQRQATAHNSTDVPTPATA</sequence>
<keyword id="KW-0028">Amino-acid biosynthesis</keyword>
<keyword id="KW-0100">Branched-chain amino acid biosynthesis</keyword>
<keyword id="KW-0963">Cytoplasm</keyword>
<keyword id="KW-0432">Leucine biosynthesis</keyword>
<keyword id="KW-0464">Manganese</keyword>
<keyword id="KW-0479">Metal-binding</keyword>
<keyword id="KW-1185">Reference proteome</keyword>
<keyword id="KW-0808">Transferase</keyword>
<protein>
    <recommendedName>
        <fullName evidence="1">2-isopropylmalate synthase</fullName>
        <ecNumber evidence="1">2.3.3.13</ecNumber>
    </recommendedName>
    <alternativeName>
        <fullName evidence="1">Alpha-IPM synthase</fullName>
    </alternativeName>
    <alternativeName>
        <fullName evidence="1">Alpha-isopropylmalate synthase</fullName>
    </alternativeName>
</protein>
<dbReference type="EC" id="2.3.3.13" evidence="1"/>
<dbReference type="EMBL" id="AM743169">
    <property type="protein sequence ID" value="CAQ47320.1"/>
    <property type="molecule type" value="Genomic_DNA"/>
</dbReference>
<dbReference type="RefSeq" id="WP_012481201.1">
    <property type="nucleotide sequence ID" value="NC_010943.1"/>
</dbReference>
<dbReference type="SMR" id="B2FT78"/>
<dbReference type="EnsemblBacteria" id="CAQ47320">
    <property type="protein sequence ID" value="CAQ47320"/>
    <property type="gene ID" value="Smlt3917"/>
</dbReference>
<dbReference type="KEGG" id="sml:Smlt3917"/>
<dbReference type="PATRIC" id="fig|522373.3.peg.3693"/>
<dbReference type="eggNOG" id="COG0119">
    <property type="taxonomic scope" value="Bacteria"/>
</dbReference>
<dbReference type="HOGENOM" id="CLU_022158_0_1_6"/>
<dbReference type="UniPathway" id="UPA00048">
    <property type="reaction ID" value="UER00070"/>
</dbReference>
<dbReference type="Proteomes" id="UP000008840">
    <property type="component" value="Chromosome"/>
</dbReference>
<dbReference type="GO" id="GO:0005829">
    <property type="term" value="C:cytosol"/>
    <property type="evidence" value="ECO:0007669"/>
    <property type="project" value="TreeGrafter"/>
</dbReference>
<dbReference type="GO" id="GO:0003852">
    <property type="term" value="F:2-isopropylmalate synthase activity"/>
    <property type="evidence" value="ECO:0007669"/>
    <property type="project" value="UniProtKB-UniRule"/>
</dbReference>
<dbReference type="GO" id="GO:0003985">
    <property type="term" value="F:acetyl-CoA C-acetyltransferase activity"/>
    <property type="evidence" value="ECO:0007669"/>
    <property type="project" value="UniProtKB-UniRule"/>
</dbReference>
<dbReference type="GO" id="GO:0030145">
    <property type="term" value="F:manganese ion binding"/>
    <property type="evidence" value="ECO:0007669"/>
    <property type="project" value="UniProtKB-UniRule"/>
</dbReference>
<dbReference type="GO" id="GO:0009098">
    <property type="term" value="P:L-leucine biosynthetic process"/>
    <property type="evidence" value="ECO:0007669"/>
    <property type="project" value="UniProtKB-UniRule"/>
</dbReference>
<dbReference type="CDD" id="cd07940">
    <property type="entry name" value="DRE_TIM_IPMS"/>
    <property type="match status" value="1"/>
</dbReference>
<dbReference type="FunFam" id="1.10.238.260:FF:000001">
    <property type="entry name" value="2-isopropylmalate synthase"/>
    <property type="match status" value="1"/>
</dbReference>
<dbReference type="FunFam" id="3.20.20.70:FF:000010">
    <property type="entry name" value="2-isopropylmalate synthase"/>
    <property type="match status" value="1"/>
</dbReference>
<dbReference type="FunFam" id="3.30.160.270:FF:000003">
    <property type="entry name" value="2-isopropylmalate synthase"/>
    <property type="match status" value="1"/>
</dbReference>
<dbReference type="Gene3D" id="1.10.238.260">
    <property type="match status" value="1"/>
</dbReference>
<dbReference type="Gene3D" id="3.30.160.270">
    <property type="match status" value="1"/>
</dbReference>
<dbReference type="Gene3D" id="3.20.20.70">
    <property type="entry name" value="Aldolase class I"/>
    <property type="match status" value="1"/>
</dbReference>
<dbReference type="HAMAP" id="MF_01025">
    <property type="entry name" value="LeuA_type1"/>
    <property type="match status" value="1"/>
</dbReference>
<dbReference type="InterPro" id="IPR050073">
    <property type="entry name" value="2-IPM_HCS-like"/>
</dbReference>
<dbReference type="InterPro" id="IPR013709">
    <property type="entry name" value="2-isopropylmalate_synth_dimer"/>
</dbReference>
<dbReference type="InterPro" id="IPR002034">
    <property type="entry name" value="AIPM/Hcit_synth_CS"/>
</dbReference>
<dbReference type="InterPro" id="IPR013785">
    <property type="entry name" value="Aldolase_TIM"/>
</dbReference>
<dbReference type="InterPro" id="IPR054691">
    <property type="entry name" value="LeuA/HCS_post-cat"/>
</dbReference>
<dbReference type="InterPro" id="IPR036230">
    <property type="entry name" value="LeuA_allosteric_dom_sf"/>
</dbReference>
<dbReference type="InterPro" id="IPR005671">
    <property type="entry name" value="LeuA_bact_synth"/>
</dbReference>
<dbReference type="InterPro" id="IPR000891">
    <property type="entry name" value="PYR_CT"/>
</dbReference>
<dbReference type="NCBIfam" id="TIGR00973">
    <property type="entry name" value="leuA_bact"/>
    <property type="match status" value="1"/>
</dbReference>
<dbReference type="NCBIfam" id="NF002086">
    <property type="entry name" value="PRK00915.1-3"/>
    <property type="match status" value="1"/>
</dbReference>
<dbReference type="PANTHER" id="PTHR10277:SF9">
    <property type="entry name" value="2-ISOPROPYLMALATE SYNTHASE 1, CHLOROPLASTIC-RELATED"/>
    <property type="match status" value="1"/>
</dbReference>
<dbReference type="PANTHER" id="PTHR10277">
    <property type="entry name" value="HOMOCITRATE SYNTHASE-RELATED"/>
    <property type="match status" value="1"/>
</dbReference>
<dbReference type="Pfam" id="PF22617">
    <property type="entry name" value="HCS_D2"/>
    <property type="match status" value="1"/>
</dbReference>
<dbReference type="Pfam" id="PF00682">
    <property type="entry name" value="HMGL-like"/>
    <property type="match status" value="1"/>
</dbReference>
<dbReference type="Pfam" id="PF08502">
    <property type="entry name" value="LeuA_dimer"/>
    <property type="match status" value="1"/>
</dbReference>
<dbReference type="SMART" id="SM00917">
    <property type="entry name" value="LeuA_dimer"/>
    <property type="match status" value="1"/>
</dbReference>
<dbReference type="SUPFAM" id="SSF110921">
    <property type="entry name" value="2-isopropylmalate synthase LeuA, allosteric (dimerisation) domain"/>
    <property type="match status" value="1"/>
</dbReference>
<dbReference type="SUPFAM" id="SSF51569">
    <property type="entry name" value="Aldolase"/>
    <property type="match status" value="1"/>
</dbReference>
<dbReference type="PROSITE" id="PS00815">
    <property type="entry name" value="AIPM_HOMOCIT_SYNTH_1"/>
    <property type="match status" value="1"/>
</dbReference>
<dbReference type="PROSITE" id="PS00816">
    <property type="entry name" value="AIPM_HOMOCIT_SYNTH_2"/>
    <property type="match status" value="1"/>
</dbReference>
<dbReference type="PROSITE" id="PS50991">
    <property type="entry name" value="PYR_CT"/>
    <property type="match status" value="1"/>
</dbReference>
<gene>
    <name evidence="1" type="primary">leuA</name>
    <name type="ordered locus">Smlt3917</name>
</gene>
<proteinExistence type="inferred from homology"/>